<comment type="function">
    <text evidence="1">Acts as a sulfur carrier required for 2-thiolation of mcm(5)S(2)U at tRNA wobble positions of cytosolic tRNA(Lys), tRNA(Glu) and tRNA(Gln). Serves as sulfur donor in tRNA 2-thiolation reaction by being thiocarboxylated (-COSH) at its C-terminus by MOCS3. The sulfur is then transferred to tRNA to form 2-thiolation of mcm(5)S(2)U. Also acts as a ubiquitin-like protein (UBL) that is covalently conjugated via an isopeptide bond to lysine residues of target proteins such as MOCS3, ATPBD3, CTU2, USP15 and CAS. The thiocarboxylated form serves as substrate for conjugation and oxidative stress specifically induces the formation of UBL-protein conjugates.</text>
</comment>
<comment type="pathway">
    <text evidence="1">tRNA modification; 5-methoxycarbonylmethyl-2-thiouridine-tRNA biosynthesis.</text>
</comment>
<comment type="subunit">
    <text evidence="1">Component of a complex at least composed of URM1, CTU2/NCS2 and CTU1/ATPBD3.</text>
</comment>
<comment type="subcellular location">
    <subcellularLocation>
        <location evidence="1">Cytoplasm</location>
    </subcellularLocation>
</comment>
<comment type="PTM">
    <text evidence="1">C-terminal thiocarboxylation occurs in 2 steps, it is first acyl-adenylated (-COAMP) via the hesA/moeB/thiF part of MOCS3, then thiocarboxylated (-COSH) via the rhodanese domain of MOCS3.</text>
</comment>
<comment type="similarity">
    <text evidence="1">Belongs to the URM1 family.</text>
</comment>
<organism>
    <name type="scientific">Mus musculus</name>
    <name type="common">Mouse</name>
    <dbReference type="NCBI Taxonomy" id="10090"/>
    <lineage>
        <taxon>Eukaryota</taxon>
        <taxon>Metazoa</taxon>
        <taxon>Chordata</taxon>
        <taxon>Craniata</taxon>
        <taxon>Vertebrata</taxon>
        <taxon>Euteleostomi</taxon>
        <taxon>Mammalia</taxon>
        <taxon>Eutheria</taxon>
        <taxon>Euarchontoglires</taxon>
        <taxon>Glires</taxon>
        <taxon>Rodentia</taxon>
        <taxon>Myomorpha</taxon>
        <taxon>Muroidea</taxon>
        <taxon>Muridae</taxon>
        <taxon>Murinae</taxon>
        <taxon>Mus</taxon>
        <taxon>Mus</taxon>
    </lineage>
</organism>
<feature type="chain" id="PRO_0000089715" description="Ubiquitin-related modifier 1">
    <location>
        <begin position="1"/>
        <end position="101"/>
    </location>
</feature>
<feature type="modified residue" description="1-thioglycine; alternate" evidence="1">
    <location>
        <position position="101"/>
    </location>
</feature>
<feature type="cross-link" description="Glycyl lysine isopeptide (Gly-Lys) (interchain with K-? in acceptor proteins); alternate" evidence="1">
    <location>
        <position position="101"/>
    </location>
</feature>
<feature type="sequence conflict" description="In Ref. 1; BAC33621." evidence="2" ref="1">
    <original>G</original>
    <variation>R</variation>
    <location>
        <position position="31"/>
    </location>
</feature>
<feature type="strand" evidence="3">
    <location>
        <begin position="5"/>
        <end position="11"/>
    </location>
</feature>
<feature type="turn" evidence="3">
    <location>
        <begin position="13"/>
        <end position="15"/>
    </location>
</feature>
<feature type="helix" evidence="3">
    <location>
        <begin position="16"/>
        <end position="18"/>
    </location>
</feature>
<feature type="turn" evidence="3">
    <location>
        <begin position="19"/>
        <end position="21"/>
    </location>
</feature>
<feature type="strand" evidence="3">
    <location>
        <begin position="23"/>
        <end position="29"/>
    </location>
</feature>
<feature type="strand" evidence="4">
    <location>
        <begin position="31"/>
        <end position="33"/>
    </location>
</feature>
<feature type="helix" evidence="3">
    <location>
        <begin position="38"/>
        <end position="45"/>
    </location>
</feature>
<feature type="turn" evidence="3">
    <location>
        <begin position="46"/>
        <end position="49"/>
    </location>
</feature>
<feature type="helix" evidence="3">
    <location>
        <begin position="54"/>
        <end position="57"/>
    </location>
</feature>
<feature type="strand" evidence="3">
    <location>
        <begin position="60"/>
        <end position="62"/>
    </location>
</feature>
<feature type="strand" evidence="3">
    <location>
        <begin position="65"/>
        <end position="75"/>
    </location>
</feature>
<feature type="helix" evidence="3">
    <location>
        <begin position="76"/>
        <end position="79"/>
    </location>
</feature>
<feature type="turn" evidence="3">
    <location>
        <begin position="81"/>
        <end position="83"/>
    </location>
</feature>
<feature type="strand" evidence="3">
    <location>
        <begin position="88"/>
        <end position="96"/>
    </location>
</feature>
<protein>
    <recommendedName>
        <fullName evidence="1">Ubiquitin-related modifier 1</fullName>
    </recommendedName>
</protein>
<accession>Q9D2P4</accession>
<accession>A3KGW2</accession>
<accession>Q8BHY9</accession>
<keyword id="KW-0002">3D-structure</keyword>
<keyword id="KW-0963">Cytoplasm</keyword>
<keyword id="KW-1017">Isopeptide bond</keyword>
<keyword id="KW-1185">Reference proteome</keyword>
<keyword id="KW-0819">tRNA processing</keyword>
<keyword id="KW-0833">Ubl conjugation pathway</keyword>
<name>URM1_MOUSE</name>
<sequence>MAAPLCVKVEFGGGAELLFDGVKKHQVALPGQEEPWDIRNLLVWIKKNLLKERPELFIQGDSVRPGILVLINDADWELLGELDYQLQDQDSILFISTLHGG</sequence>
<evidence type="ECO:0000255" key="1">
    <source>
        <dbReference type="HAMAP-Rule" id="MF_03048"/>
    </source>
</evidence>
<evidence type="ECO:0000305" key="2"/>
<evidence type="ECO:0007829" key="3">
    <source>
        <dbReference type="PDB" id="1WGK"/>
    </source>
</evidence>
<evidence type="ECO:0007829" key="4">
    <source>
        <dbReference type="PDB" id="1XO3"/>
    </source>
</evidence>
<gene>
    <name type="primary">Urm1</name>
</gene>
<proteinExistence type="evidence at protein level"/>
<dbReference type="EMBL" id="AK019352">
    <property type="protein sequence ID" value="BAB31673.1"/>
    <property type="molecule type" value="mRNA"/>
</dbReference>
<dbReference type="EMBL" id="AK049227">
    <property type="protein sequence ID" value="BAC33621.1"/>
    <property type="molecule type" value="mRNA"/>
</dbReference>
<dbReference type="EMBL" id="AK049849">
    <property type="protein sequence ID" value="BAC33956.1"/>
    <property type="molecule type" value="mRNA"/>
</dbReference>
<dbReference type="EMBL" id="AL928926">
    <property type="status" value="NOT_ANNOTATED_CDS"/>
    <property type="molecule type" value="Genomic_DNA"/>
</dbReference>
<dbReference type="EMBL" id="CH466542">
    <property type="protein sequence ID" value="EDL08423.1"/>
    <property type="molecule type" value="Genomic_DNA"/>
</dbReference>
<dbReference type="EMBL" id="BC026994">
    <property type="protein sequence ID" value="AAH26994.1"/>
    <property type="molecule type" value="mRNA"/>
</dbReference>
<dbReference type="CCDS" id="CCDS15859.1"/>
<dbReference type="RefSeq" id="NP_080891.1">
    <property type="nucleotide sequence ID" value="NM_026615.4"/>
</dbReference>
<dbReference type="PDB" id="1WGK">
    <property type="method" value="NMR"/>
    <property type="chains" value="A=1-101"/>
</dbReference>
<dbReference type="PDB" id="1XO3">
    <property type="method" value="NMR"/>
    <property type="chains" value="A=2-101"/>
</dbReference>
<dbReference type="PDBsum" id="1WGK"/>
<dbReference type="PDBsum" id="1XO3"/>
<dbReference type="BMRB" id="Q9D2P4"/>
<dbReference type="SMR" id="Q9D2P4"/>
<dbReference type="BioGRID" id="212728">
    <property type="interactions" value="4"/>
</dbReference>
<dbReference type="FunCoup" id="Q9D2P4">
    <property type="interactions" value="2584"/>
</dbReference>
<dbReference type="STRING" id="10090.ENSMUSP00000088676"/>
<dbReference type="iPTMnet" id="Q9D2P4"/>
<dbReference type="PhosphoSitePlus" id="Q9D2P4"/>
<dbReference type="PaxDb" id="10090-ENSMUSP00000088676"/>
<dbReference type="PeptideAtlas" id="Q9D2P4"/>
<dbReference type="ProteomicsDB" id="299645"/>
<dbReference type="Pumba" id="Q9D2P4"/>
<dbReference type="Antibodypedia" id="17464">
    <property type="antibodies" value="131 antibodies from 27 providers"/>
</dbReference>
<dbReference type="DNASU" id="68205"/>
<dbReference type="Ensembl" id="ENSMUST00000091142.4">
    <property type="protein sequence ID" value="ENSMUSP00000088676.4"/>
    <property type="gene ID" value="ENSMUSG00000069020.10"/>
</dbReference>
<dbReference type="GeneID" id="68205"/>
<dbReference type="KEGG" id="mmu:68205"/>
<dbReference type="UCSC" id="uc008jag.1">
    <property type="organism name" value="mouse"/>
</dbReference>
<dbReference type="AGR" id="MGI:1915455"/>
<dbReference type="CTD" id="81605"/>
<dbReference type="MGI" id="MGI:1915455">
    <property type="gene designation" value="Urm1"/>
</dbReference>
<dbReference type="VEuPathDB" id="HostDB:ENSMUSG00000069020"/>
<dbReference type="eggNOG" id="KOG4146">
    <property type="taxonomic scope" value="Eukaryota"/>
</dbReference>
<dbReference type="GeneTree" id="ENSGT00390000005101"/>
<dbReference type="HOGENOM" id="CLU_148208_0_1_1"/>
<dbReference type="InParanoid" id="Q9D2P4"/>
<dbReference type="OMA" id="DYELQPN"/>
<dbReference type="OrthoDB" id="89129at9989"/>
<dbReference type="PhylomeDB" id="Q9D2P4"/>
<dbReference type="TreeFam" id="TF336363"/>
<dbReference type="UniPathway" id="UPA00988"/>
<dbReference type="BioGRID-ORCS" id="68205">
    <property type="hits" value="23 hits in 78 CRISPR screens"/>
</dbReference>
<dbReference type="ChiTaRS" id="Urm1">
    <property type="organism name" value="mouse"/>
</dbReference>
<dbReference type="EvolutionaryTrace" id="Q9D2P4"/>
<dbReference type="PRO" id="PR:Q9D2P4"/>
<dbReference type="Proteomes" id="UP000000589">
    <property type="component" value="Chromosome 2"/>
</dbReference>
<dbReference type="RNAct" id="Q9D2P4">
    <property type="molecule type" value="protein"/>
</dbReference>
<dbReference type="Bgee" id="ENSMUSG00000069020">
    <property type="expression patterns" value="Expressed in yolk sac and 250 other cell types or tissues"/>
</dbReference>
<dbReference type="GO" id="GO:0005829">
    <property type="term" value="C:cytosol"/>
    <property type="evidence" value="ECO:0007669"/>
    <property type="project" value="UniProtKB-UniRule"/>
</dbReference>
<dbReference type="GO" id="GO:0097163">
    <property type="term" value="F:sulfur carrier activity"/>
    <property type="evidence" value="ECO:0007669"/>
    <property type="project" value="Ensembl"/>
</dbReference>
<dbReference type="GO" id="GO:0032447">
    <property type="term" value="P:protein urmylation"/>
    <property type="evidence" value="ECO:0007669"/>
    <property type="project" value="UniProtKB-UniRule"/>
</dbReference>
<dbReference type="GO" id="GO:0034227">
    <property type="term" value="P:tRNA thio-modification"/>
    <property type="evidence" value="ECO:0000250"/>
    <property type="project" value="UniProtKB"/>
</dbReference>
<dbReference type="GO" id="GO:0002098">
    <property type="term" value="P:tRNA wobble uridine modification"/>
    <property type="evidence" value="ECO:0000250"/>
    <property type="project" value="UniProtKB"/>
</dbReference>
<dbReference type="CDD" id="cd01764">
    <property type="entry name" value="Ubl_Urm1"/>
    <property type="match status" value="1"/>
</dbReference>
<dbReference type="FunFam" id="3.10.20.30:FF:000021">
    <property type="entry name" value="Ubiquitin-related modifier 1"/>
    <property type="match status" value="1"/>
</dbReference>
<dbReference type="Gene3D" id="3.10.20.30">
    <property type="match status" value="1"/>
</dbReference>
<dbReference type="HAMAP" id="MF_03048">
    <property type="entry name" value="Urm1"/>
    <property type="match status" value="1"/>
</dbReference>
<dbReference type="InterPro" id="IPR012675">
    <property type="entry name" value="Beta-grasp_dom_sf"/>
</dbReference>
<dbReference type="InterPro" id="IPR016155">
    <property type="entry name" value="Mopterin_synth/thiamin_S_b"/>
</dbReference>
<dbReference type="InterPro" id="IPR015221">
    <property type="entry name" value="Urm1"/>
</dbReference>
<dbReference type="PANTHER" id="PTHR14986">
    <property type="entry name" value="RURM1 PROTEIN"/>
    <property type="match status" value="1"/>
</dbReference>
<dbReference type="Pfam" id="PF09138">
    <property type="entry name" value="Urm1"/>
    <property type="match status" value="1"/>
</dbReference>
<dbReference type="PIRSF" id="PIRSF037379">
    <property type="entry name" value="Ubiquitin-related_modifier_1"/>
    <property type="match status" value="1"/>
</dbReference>
<dbReference type="SUPFAM" id="SSF54285">
    <property type="entry name" value="MoaD/ThiS"/>
    <property type="match status" value="1"/>
</dbReference>
<reference key="1">
    <citation type="journal article" date="2005" name="Science">
        <title>The transcriptional landscape of the mammalian genome.</title>
        <authorList>
            <person name="Carninci P."/>
            <person name="Kasukawa T."/>
            <person name="Katayama S."/>
            <person name="Gough J."/>
            <person name="Frith M.C."/>
            <person name="Maeda N."/>
            <person name="Oyama R."/>
            <person name="Ravasi T."/>
            <person name="Lenhard B."/>
            <person name="Wells C."/>
            <person name="Kodzius R."/>
            <person name="Shimokawa K."/>
            <person name="Bajic V.B."/>
            <person name="Brenner S.E."/>
            <person name="Batalov S."/>
            <person name="Forrest A.R."/>
            <person name="Zavolan M."/>
            <person name="Davis M.J."/>
            <person name="Wilming L.G."/>
            <person name="Aidinis V."/>
            <person name="Allen J.E."/>
            <person name="Ambesi-Impiombato A."/>
            <person name="Apweiler R."/>
            <person name="Aturaliya R.N."/>
            <person name="Bailey T.L."/>
            <person name="Bansal M."/>
            <person name="Baxter L."/>
            <person name="Beisel K.W."/>
            <person name="Bersano T."/>
            <person name="Bono H."/>
            <person name="Chalk A.M."/>
            <person name="Chiu K.P."/>
            <person name="Choudhary V."/>
            <person name="Christoffels A."/>
            <person name="Clutterbuck D.R."/>
            <person name="Crowe M.L."/>
            <person name="Dalla E."/>
            <person name="Dalrymple B.P."/>
            <person name="de Bono B."/>
            <person name="Della Gatta G."/>
            <person name="di Bernardo D."/>
            <person name="Down T."/>
            <person name="Engstrom P."/>
            <person name="Fagiolini M."/>
            <person name="Faulkner G."/>
            <person name="Fletcher C.F."/>
            <person name="Fukushima T."/>
            <person name="Furuno M."/>
            <person name="Futaki S."/>
            <person name="Gariboldi M."/>
            <person name="Georgii-Hemming P."/>
            <person name="Gingeras T.R."/>
            <person name="Gojobori T."/>
            <person name="Green R.E."/>
            <person name="Gustincich S."/>
            <person name="Harbers M."/>
            <person name="Hayashi Y."/>
            <person name="Hensch T.K."/>
            <person name="Hirokawa N."/>
            <person name="Hill D."/>
            <person name="Huminiecki L."/>
            <person name="Iacono M."/>
            <person name="Ikeo K."/>
            <person name="Iwama A."/>
            <person name="Ishikawa T."/>
            <person name="Jakt M."/>
            <person name="Kanapin A."/>
            <person name="Katoh M."/>
            <person name="Kawasawa Y."/>
            <person name="Kelso J."/>
            <person name="Kitamura H."/>
            <person name="Kitano H."/>
            <person name="Kollias G."/>
            <person name="Krishnan S.P."/>
            <person name="Kruger A."/>
            <person name="Kummerfeld S.K."/>
            <person name="Kurochkin I.V."/>
            <person name="Lareau L.F."/>
            <person name="Lazarevic D."/>
            <person name="Lipovich L."/>
            <person name="Liu J."/>
            <person name="Liuni S."/>
            <person name="McWilliam S."/>
            <person name="Madan Babu M."/>
            <person name="Madera M."/>
            <person name="Marchionni L."/>
            <person name="Matsuda H."/>
            <person name="Matsuzawa S."/>
            <person name="Miki H."/>
            <person name="Mignone F."/>
            <person name="Miyake S."/>
            <person name="Morris K."/>
            <person name="Mottagui-Tabar S."/>
            <person name="Mulder N."/>
            <person name="Nakano N."/>
            <person name="Nakauchi H."/>
            <person name="Ng P."/>
            <person name="Nilsson R."/>
            <person name="Nishiguchi S."/>
            <person name="Nishikawa S."/>
            <person name="Nori F."/>
            <person name="Ohara O."/>
            <person name="Okazaki Y."/>
            <person name="Orlando V."/>
            <person name="Pang K.C."/>
            <person name="Pavan W.J."/>
            <person name="Pavesi G."/>
            <person name="Pesole G."/>
            <person name="Petrovsky N."/>
            <person name="Piazza S."/>
            <person name="Reed J."/>
            <person name="Reid J.F."/>
            <person name="Ring B.Z."/>
            <person name="Ringwald M."/>
            <person name="Rost B."/>
            <person name="Ruan Y."/>
            <person name="Salzberg S.L."/>
            <person name="Sandelin A."/>
            <person name="Schneider C."/>
            <person name="Schoenbach C."/>
            <person name="Sekiguchi K."/>
            <person name="Semple C.A."/>
            <person name="Seno S."/>
            <person name="Sessa L."/>
            <person name="Sheng Y."/>
            <person name="Shibata Y."/>
            <person name="Shimada H."/>
            <person name="Shimada K."/>
            <person name="Silva D."/>
            <person name="Sinclair B."/>
            <person name="Sperling S."/>
            <person name="Stupka E."/>
            <person name="Sugiura K."/>
            <person name="Sultana R."/>
            <person name="Takenaka Y."/>
            <person name="Taki K."/>
            <person name="Tammoja K."/>
            <person name="Tan S.L."/>
            <person name="Tang S."/>
            <person name="Taylor M.S."/>
            <person name="Tegner J."/>
            <person name="Teichmann S.A."/>
            <person name="Ueda H.R."/>
            <person name="van Nimwegen E."/>
            <person name="Verardo R."/>
            <person name="Wei C.L."/>
            <person name="Yagi K."/>
            <person name="Yamanishi H."/>
            <person name="Zabarovsky E."/>
            <person name="Zhu S."/>
            <person name="Zimmer A."/>
            <person name="Hide W."/>
            <person name="Bult C."/>
            <person name="Grimmond S.M."/>
            <person name="Teasdale R.D."/>
            <person name="Liu E.T."/>
            <person name="Brusic V."/>
            <person name="Quackenbush J."/>
            <person name="Wahlestedt C."/>
            <person name="Mattick J.S."/>
            <person name="Hume D.A."/>
            <person name="Kai C."/>
            <person name="Sasaki D."/>
            <person name="Tomaru Y."/>
            <person name="Fukuda S."/>
            <person name="Kanamori-Katayama M."/>
            <person name="Suzuki M."/>
            <person name="Aoki J."/>
            <person name="Arakawa T."/>
            <person name="Iida J."/>
            <person name="Imamura K."/>
            <person name="Itoh M."/>
            <person name="Kato T."/>
            <person name="Kawaji H."/>
            <person name="Kawagashira N."/>
            <person name="Kawashima T."/>
            <person name="Kojima M."/>
            <person name="Kondo S."/>
            <person name="Konno H."/>
            <person name="Nakano K."/>
            <person name="Ninomiya N."/>
            <person name="Nishio T."/>
            <person name="Okada M."/>
            <person name="Plessy C."/>
            <person name="Shibata K."/>
            <person name="Shiraki T."/>
            <person name="Suzuki S."/>
            <person name="Tagami M."/>
            <person name="Waki K."/>
            <person name="Watahiki A."/>
            <person name="Okamura-Oho Y."/>
            <person name="Suzuki H."/>
            <person name="Kawai J."/>
            <person name="Hayashizaki Y."/>
        </authorList>
    </citation>
    <scope>NUCLEOTIDE SEQUENCE [LARGE SCALE MRNA]</scope>
    <source>
        <strain>C57BL/6J</strain>
        <tissue>Hippocampus</tissue>
    </source>
</reference>
<reference key="2">
    <citation type="journal article" date="2009" name="PLoS Biol.">
        <title>Lineage-specific biology revealed by a finished genome assembly of the mouse.</title>
        <authorList>
            <person name="Church D.M."/>
            <person name="Goodstadt L."/>
            <person name="Hillier L.W."/>
            <person name="Zody M.C."/>
            <person name="Goldstein S."/>
            <person name="She X."/>
            <person name="Bult C.J."/>
            <person name="Agarwala R."/>
            <person name="Cherry J.L."/>
            <person name="DiCuccio M."/>
            <person name="Hlavina W."/>
            <person name="Kapustin Y."/>
            <person name="Meric P."/>
            <person name="Maglott D."/>
            <person name="Birtle Z."/>
            <person name="Marques A.C."/>
            <person name="Graves T."/>
            <person name="Zhou S."/>
            <person name="Teague B."/>
            <person name="Potamousis K."/>
            <person name="Churas C."/>
            <person name="Place M."/>
            <person name="Herschleb J."/>
            <person name="Runnheim R."/>
            <person name="Forrest D."/>
            <person name="Amos-Landgraf J."/>
            <person name="Schwartz D.C."/>
            <person name="Cheng Z."/>
            <person name="Lindblad-Toh K."/>
            <person name="Eichler E.E."/>
            <person name="Ponting C.P."/>
        </authorList>
    </citation>
    <scope>NUCLEOTIDE SEQUENCE [LARGE SCALE GENOMIC DNA]</scope>
    <source>
        <strain>C57BL/6J</strain>
    </source>
</reference>
<reference key="3">
    <citation type="submission" date="2005-07" db="EMBL/GenBank/DDBJ databases">
        <authorList>
            <person name="Mural R.J."/>
            <person name="Adams M.D."/>
            <person name="Myers E.W."/>
            <person name="Smith H.O."/>
            <person name="Venter J.C."/>
        </authorList>
    </citation>
    <scope>NUCLEOTIDE SEQUENCE [LARGE SCALE GENOMIC DNA]</scope>
</reference>
<reference key="4">
    <citation type="journal article" date="2004" name="Genome Res.">
        <title>The status, quality, and expansion of the NIH full-length cDNA project: the Mammalian Gene Collection (MGC).</title>
        <authorList>
            <consortium name="The MGC Project Team"/>
        </authorList>
    </citation>
    <scope>NUCLEOTIDE SEQUENCE [LARGE SCALE MRNA]</scope>
    <source>
        <tissue>Eye</tissue>
    </source>
</reference>
<reference key="5">
    <citation type="journal article" date="2010" name="Cell">
        <title>A tissue-specific atlas of mouse protein phosphorylation and expression.</title>
        <authorList>
            <person name="Huttlin E.L."/>
            <person name="Jedrychowski M.P."/>
            <person name="Elias J.E."/>
            <person name="Goswami T."/>
            <person name="Rad R."/>
            <person name="Beausoleil S.A."/>
            <person name="Villen J."/>
            <person name="Haas W."/>
            <person name="Sowa M.E."/>
            <person name="Gygi S.P."/>
        </authorList>
    </citation>
    <scope>IDENTIFICATION BY MASS SPECTROMETRY [LARGE SCALE ANALYSIS]</scope>
    <source>
        <tissue>Brain</tissue>
        <tissue>Testis</tissue>
    </source>
</reference>
<reference key="6">
    <citation type="submission" date="2004-05" db="PDB data bank">
        <title>Solution structure of mouse hypothetical protein 2900073H19RIK.</title>
        <authorList>
            <consortium name="RIKEN structural genomics initiative (RSGI)"/>
        </authorList>
    </citation>
    <scope>STRUCTURE BY NMR</scope>
</reference>
<reference key="7">
    <citation type="journal article" date="2005" name="Protein Sci.">
        <title>Three-dimensional structure of the AAH26994.1 protein from Mus musculus, a putative eukaryotic Urm1.</title>
        <authorList>
            <person name="Singh S."/>
            <person name="Tonelli M."/>
            <person name="Tyler R.C."/>
            <person name="Bahrami A."/>
            <person name="Lee M.S."/>
            <person name="Markley J.L."/>
        </authorList>
    </citation>
    <scope>STRUCTURE BY NMR OF 2-101</scope>
</reference>